<organism>
    <name type="scientific">Shewanella denitrificans (strain OS217 / ATCC BAA-1090 / DSM 15013)</name>
    <dbReference type="NCBI Taxonomy" id="318161"/>
    <lineage>
        <taxon>Bacteria</taxon>
        <taxon>Pseudomonadati</taxon>
        <taxon>Pseudomonadota</taxon>
        <taxon>Gammaproteobacteria</taxon>
        <taxon>Alteromonadales</taxon>
        <taxon>Shewanellaceae</taxon>
        <taxon>Shewanella</taxon>
    </lineage>
</organism>
<sequence>MTEQTDAAMPIKFTDAAAIKVKGLLEEEQNPELKLRVYVTGGGCSGFQYGFTFDEKSSADDFVIEKQGVKLVVDPMSLQYLVGGEVDYTSGLEGSRFFVKNPNASSTCGCGASFSV</sequence>
<accession>Q12KD2</accession>
<feature type="chain" id="PRO_0000311550" description="Iron-sulfur cluster insertion protein ErpA">
    <location>
        <begin position="1"/>
        <end position="116"/>
    </location>
</feature>
<feature type="binding site" evidence="1">
    <location>
        <position position="44"/>
    </location>
    <ligand>
        <name>iron-sulfur cluster</name>
        <dbReference type="ChEBI" id="CHEBI:30408"/>
    </ligand>
</feature>
<feature type="binding site" evidence="1">
    <location>
        <position position="108"/>
    </location>
    <ligand>
        <name>iron-sulfur cluster</name>
        <dbReference type="ChEBI" id="CHEBI:30408"/>
    </ligand>
</feature>
<feature type="binding site" evidence="1">
    <location>
        <position position="110"/>
    </location>
    <ligand>
        <name>iron-sulfur cluster</name>
        <dbReference type="ChEBI" id="CHEBI:30408"/>
    </ligand>
</feature>
<keyword id="KW-0408">Iron</keyword>
<keyword id="KW-0411">Iron-sulfur</keyword>
<keyword id="KW-0479">Metal-binding</keyword>
<keyword id="KW-1185">Reference proteome</keyword>
<evidence type="ECO:0000255" key="1">
    <source>
        <dbReference type="HAMAP-Rule" id="MF_01380"/>
    </source>
</evidence>
<name>ERPA_SHEDO</name>
<gene>
    <name evidence="1" type="primary">erpA</name>
    <name type="ordered locus">Sden_2815</name>
</gene>
<dbReference type="EMBL" id="CP000302">
    <property type="protein sequence ID" value="ABE56094.1"/>
    <property type="molecule type" value="Genomic_DNA"/>
</dbReference>
<dbReference type="RefSeq" id="WP_011497244.1">
    <property type="nucleotide sequence ID" value="NC_007954.1"/>
</dbReference>
<dbReference type="SMR" id="Q12KD2"/>
<dbReference type="STRING" id="318161.Sden_2815"/>
<dbReference type="KEGG" id="sdn:Sden_2815"/>
<dbReference type="eggNOG" id="COG0316">
    <property type="taxonomic scope" value="Bacteria"/>
</dbReference>
<dbReference type="HOGENOM" id="CLU_069054_5_3_6"/>
<dbReference type="OrthoDB" id="9801228at2"/>
<dbReference type="Proteomes" id="UP000001982">
    <property type="component" value="Chromosome"/>
</dbReference>
<dbReference type="GO" id="GO:0005829">
    <property type="term" value="C:cytosol"/>
    <property type="evidence" value="ECO:0007669"/>
    <property type="project" value="TreeGrafter"/>
</dbReference>
<dbReference type="GO" id="GO:0051537">
    <property type="term" value="F:2 iron, 2 sulfur cluster binding"/>
    <property type="evidence" value="ECO:0007669"/>
    <property type="project" value="UniProtKB-ARBA"/>
</dbReference>
<dbReference type="GO" id="GO:0051539">
    <property type="term" value="F:4 iron, 4 sulfur cluster binding"/>
    <property type="evidence" value="ECO:0007669"/>
    <property type="project" value="TreeGrafter"/>
</dbReference>
<dbReference type="GO" id="GO:0005506">
    <property type="term" value="F:iron ion binding"/>
    <property type="evidence" value="ECO:0007669"/>
    <property type="project" value="UniProtKB-UniRule"/>
</dbReference>
<dbReference type="GO" id="GO:0016226">
    <property type="term" value="P:iron-sulfur cluster assembly"/>
    <property type="evidence" value="ECO:0007669"/>
    <property type="project" value="UniProtKB-UniRule"/>
</dbReference>
<dbReference type="FunFam" id="2.60.300.12:FF:000002">
    <property type="entry name" value="Iron-sulfur cluster insertion protein ErpA"/>
    <property type="match status" value="1"/>
</dbReference>
<dbReference type="Gene3D" id="2.60.300.12">
    <property type="entry name" value="HesB-like domain"/>
    <property type="match status" value="1"/>
</dbReference>
<dbReference type="HAMAP" id="MF_01380">
    <property type="entry name" value="Fe_S_insert_ErpA"/>
    <property type="match status" value="1"/>
</dbReference>
<dbReference type="InterPro" id="IPR000361">
    <property type="entry name" value="FeS_biogenesis"/>
</dbReference>
<dbReference type="InterPro" id="IPR016092">
    <property type="entry name" value="FeS_cluster_insertion"/>
</dbReference>
<dbReference type="InterPro" id="IPR017870">
    <property type="entry name" value="FeS_cluster_insertion_CS"/>
</dbReference>
<dbReference type="InterPro" id="IPR023063">
    <property type="entry name" value="FeS_cluster_insertion_RrpA"/>
</dbReference>
<dbReference type="InterPro" id="IPR035903">
    <property type="entry name" value="HesB-like_dom_sf"/>
</dbReference>
<dbReference type="NCBIfam" id="TIGR00049">
    <property type="entry name" value="iron-sulfur cluster assembly accessory protein"/>
    <property type="match status" value="1"/>
</dbReference>
<dbReference type="NCBIfam" id="NF010147">
    <property type="entry name" value="PRK13623.1"/>
    <property type="match status" value="1"/>
</dbReference>
<dbReference type="PANTHER" id="PTHR43011">
    <property type="entry name" value="IRON-SULFUR CLUSTER ASSEMBLY 2 HOMOLOG, MITOCHONDRIAL"/>
    <property type="match status" value="1"/>
</dbReference>
<dbReference type="PANTHER" id="PTHR43011:SF1">
    <property type="entry name" value="IRON-SULFUR CLUSTER ASSEMBLY 2 HOMOLOG, MITOCHONDRIAL"/>
    <property type="match status" value="1"/>
</dbReference>
<dbReference type="Pfam" id="PF01521">
    <property type="entry name" value="Fe-S_biosyn"/>
    <property type="match status" value="1"/>
</dbReference>
<dbReference type="SUPFAM" id="SSF89360">
    <property type="entry name" value="HesB-like domain"/>
    <property type="match status" value="1"/>
</dbReference>
<dbReference type="PROSITE" id="PS01152">
    <property type="entry name" value="HESB"/>
    <property type="match status" value="1"/>
</dbReference>
<reference key="1">
    <citation type="submission" date="2006-03" db="EMBL/GenBank/DDBJ databases">
        <title>Complete sequence of Shewanella denitrificans OS217.</title>
        <authorList>
            <consortium name="US DOE Joint Genome Institute"/>
            <person name="Copeland A."/>
            <person name="Lucas S."/>
            <person name="Lapidus A."/>
            <person name="Barry K."/>
            <person name="Detter J.C."/>
            <person name="Glavina del Rio T."/>
            <person name="Hammon N."/>
            <person name="Israni S."/>
            <person name="Dalin E."/>
            <person name="Tice H."/>
            <person name="Pitluck S."/>
            <person name="Brettin T."/>
            <person name="Bruce D."/>
            <person name="Han C."/>
            <person name="Tapia R."/>
            <person name="Gilna P."/>
            <person name="Kiss H."/>
            <person name="Schmutz J."/>
            <person name="Larimer F."/>
            <person name="Land M."/>
            <person name="Hauser L."/>
            <person name="Kyrpides N."/>
            <person name="Lykidis A."/>
            <person name="Richardson P."/>
        </authorList>
    </citation>
    <scope>NUCLEOTIDE SEQUENCE [LARGE SCALE GENOMIC DNA]</scope>
    <source>
        <strain>OS217 / ATCC BAA-1090 / DSM 15013</strain>
    </source>
</reference>
<protein>
    <recommendedName>
        <fullName evidence="1">Iron-sulfur cluster insertion protein ErpA</fullName>
    </recommendedName>
</protein>
<comment type="function">
    <text evidence="1">Required for insertion of 4Fe-4S clusters for at least IspG.</text>
</comment>
<comment type="cofactor">
    <cofactor evidence="1">
        <name>iron-sulfur cluster</name>
        <dbReference type="ChEBI" id="CHEBI:30408"/>
    </cofactor>
    <text evidence="1">Binds 1 iron-sulfur cluster per subunit.</text>
</comment>
<comment type="subunit">
    <text evidence="1">Homodimer.</text>
</comment>
<comment type="similarity">
    <text evidence="1">Belongs to the HesB/IscA family.</text>
</comment>
<proteinExistence type="inferred from homology"/>